<reference evidence="8" key="1">
    <citation type="journal article" date="2000" name="Genetics">
        <title>The Drosophila melanogaster ade5 gene encodes a bifunctional enzyme for two steps in the de novo purine synthesis pathway.</title>
        <authorList>
            <person name="O'Donnell A.F."/>
            <person name="Tiong S."/>
            <person name="Nash D."/>
            <person name="Clark D.V."/>
        </authorList>
    </citation>
    <scope>NUCLEOTIDE SEQUENCE [GENOMIC DNA / MRNA]</scope>
    <scope>FUNCTION</scope>
    <scope>CATALYTIC ACTIVITY</scope>
    <source>
        <strain evidence="8">Canton-S</strain>
    </source>
</reference>
<reference evidence="9" key="2">
    <citation type="journal article" date="2000" name="Science">
        <title>The genome sequence of Drosophila melanogaster.</title>
        <authorList>
            <person name="Adams M.D."/>
            <person name="Celniker S.E."/>
            <person name="Holt R.A."/>
            <person name="Evans C.A."/>
            <person name="Gocayne J.D."/>
            <person name="Amanatides P.G."/>
            <person name="Scherer S.E."/>
            <person name="Li P.W."/>
            <person name="Hoskins R.A."/>
            <person name="Galle R.F."/>
            <person name="George R.A."/>
            <person name="Lewis S.E."/>
            <person name="Richards S."/>
            <person name="Ashburner M."/>
            <person name="Henderson S.N."/>
            <person name="Sutton G.G."/>
            <person name="Wortman J.R."/>
            <person name="Yandell M.D."/>
            <person name="Zhang Q."/>
            <person name="Chen L.X."/>
            <person name="Brandon R.C."/>
            <person name="Rogers Y.-H.C."/>
            <person name="Blazej R.G."/>
            <person name="Champe M."/>
            <person name="Pfeiffer B.D."/>
            <person name="Wan K.H."/>
            <person name="Doyle C."/>
            <person name="Baxter E.G."/>
            <person name="Helt G."/>
            <person name="Nelson C.R."/>
            <person name="Miklos G.L.G."/>
            <person name="Abril J.F."/>
            <person name="Agbayani A."/>
            <person name="An H.-J."/>
            <person name="Andrews-Pfannkoch C."/>
            <person name="Baldwin D."/>
            <person name="Ballew R.M."/>
            <person name="Basu A."/>
            <person name="Baxendale J."/>
            <person name="Bayraktaroglu L."/>
            <person name="Beasley E.M."/>
            <person name="Beeson K.Y."/>
            <person name="Benos P.V."/>
            <person name="Berman B.P."/>
            <person name="Bhandari D."/>
            <person name="Bolshakov S."/>
            <person name="Borkova D."/>
            <person name="Botchan M.R."/>
            <person name="Bouck J."/>
            <person name="Brokstein P."/>
            <person name="Brottier P."/>
            <person name="Burtis K.C."/>
            <person name="Busam D.A."/>
            <person name="Butler H."/>
            <person name="Cadieu E."/>
            <person name="Center A."/>
            <person name="Chandra I."/>
            <person name="Cherry J.M."/>
            <person name="Cawley S."/>
            <person name="Dahlke C."/>
            <person name="Davenport L.B."/>
            <person name="Davies P."/>
            <person name="de Pablos B."/>
            <person name="Delcher A."/>
            <person name="Deng Z."/>
            <person name="Mays A.D."/>
            <person name="Dew I."/>
            <person name="Dietz S.M."/>
            <person name="Dodson K."/>
            <person name="Doup L.E."/>
            <person name="Downes M."/>
            <person name="Dugan-Rocha S."/>
            <person name="Dunkov B.C."/>
            <person name="Dunn P."/>
            <person name="Durbin K.J."/>
            <person name="Evangelista C.C."/>
            <person name="Ferraz C."/>
            <person name="Ferriera S."/>
            <person name="Fleischmann W."/>
            <person name="Fosler C."/>
            <person name="Gabrielian A.E."/>
            <person name="Garg N.S."/>
            <person name="Gelbart W.M."/>
            <person name="Glasser K."/>
            <person name="Glodek A."/>
            <person name="Gong F."/>
            <person name="Gorrell J.H."/>
            <person name="Gu Z."/>
            <person name="Guan P."/>
            <person name="Harris M."/>
            <person name="Harris N.L."/>
            <person name="Harvey D.A."/>
            <person name="Heiman T.J."/>
            <person name="Hernandez J.R."/>
            <person name="Houck J."/>
            <person name="Hostin D."/>
            <person name="Houston K.A."/>
            <person name="Howland T.J."/>
            <person name="Wei M.-H."/>
            <person name="Ibegwam C."/>
            <person name="Jalali M."/>
            <person name="Kalush F."/>
            <person name="Karpen G.H."/>
            <person name="Ke Z."/>
            <person name="Kennison J.A."/>
            <person name="Ketchum K.A."/>
            <person name="Kimmel B.E."/>
            <person name="Kodira C.D."/>
            <person name="Kraft C.L."/>
            <person name="Kravitz S."/>
            <person name="Kulp D."/>
            <person name="Lai Z."/>
            <person name="Lasko P."/>
            <person name="Lei Y."/>
            <person name="Levitsky A.A."/>
            <person name="Li J.H."/>
            <person name="Li Z."/>
            <person name="Liang Y."/>
            <person name="Lin X."/>
            <person name="Liu X."/>
            <person name="Mattei B."/>
            <person name="McIntosh T.C."/>
            <person name="McLeod M.P."/>
            <person name="McPherson D."/>
            <person name="Merkulov G."/>
            <person name="Milshina N.V."/>
            <person name="Mobarry C."/>
            <person name="Morris J."/>
            <person name="Moshrefi A."/>
            <person name="Mount S.M."/>
            <person name="Moy M."/>
            <person name="Murphy B."/>
            <person name="Murphy L."/>
            <person name="Muzny D.M."/>
            <person name="Nelson D.L."/>
            <person name="Nelson D.R."/>
            <person name="Nelson K.A."/>
            <person name="Nixon K."/>
            <person name="Nusskern D.R."/>
            <person name="Pacleb J.M."/>
            <person name="Palazzolo M."/>
            <person name="Pittman G.S."/>
            <person name="Pan S."/>
            <person name="Pollard J."/>
            <person name="Puri V."/>
            <person name="Reese M.G."/>
            <person name="Reinert K."/>
            <person name="Remington K."/>
            <person name="Saunders R.D.C."/>
            <person name="Scheeler F."/>
            <person name="Shen H."/>
            <person name="Shue B.C."/>
            <person name="Siden-Kiamos I."/>
            <person name="Simpson M."/>
            <person name="Skupski M.P."/>
            <person name="Smith T.J."/>
            <person name="Spier E."/>
            <person name="Spradling A.C."/>
            <person name="Stapleton M."/>
            <person name="Strong R."/>
            <person name="Sun E."/>
            <person name="Svirskas R."/>
            <person name="Tector C."/>
            <person name="Turner R."/>
            <person name="Venter E."/>
            <person name="Wang A.H."/>
            <person name="Wang X."/>
            <person name="Wang Z.-Y."/>
            <person name="Wassarman D.A."/>
            <person name="Weinstock G.M."/>
            <person name="Weissenbach J."/>
            <person name="Williams S.M."/>
            <person name="Woodage T."/>
            <person name="Worley K.C."/>
            <person name="Wu D."/>
            <person name="Yang S."/>
            <person name="Yao Q.A."/>
            <person name="Ye J."/>
            <person name="Yeh R.-F."/>
            <person name="Zaveri J.S."/>
            <person name="Zhan M."/>
            <person name="Zhang G."/>
            <person name="Zhao Q."/>
            <person name="Zheng L."/>
            <person name="Zheng X.H."/>
            <person name="Zhong F.N."/>
            <person name="Zhong W."/>
            <person name="Zhou X."/>
            <person name="Zhu S.C."/>
            <person name="Zhu X."/>
            <person name="Smith H.O."/>
            <person name="Gibbs R.A."/>
            <person name="Myers E.W."/>
            <person name="Rubin G.M."/>
            <person name="Venter J.C."/>
        </authorList>
    </citation>
    <scope>NUCLEOTIDE SEQUENCE [LARGE SCALE GENOMIC DNA]</scope>
    <source>
        <strain evidence="9">Berkeley</strain>
    </source>
</reference>
<reference evidence="6 9" key="3">
    <citation type="journal article" date="2002" name="Genome Biol.">
        <title>Annotation of the Drosophila melanogaster euchromatic genome: a systematic review.</title>
        <authorList>
            <person name="Misra S."/>
            <person name="Crosby M.A."/>
            <person name="Mungall C.J."/>
            <person name="Matthews B.B."/>
            <person name="Campbell K.S."/>
            <person name="Hradecky P."/>
            <person name="Huang Y."/>
            <person name="Kaminker J.S."/>
            <person name="Millburn G.H."/>
            <person name="Prochnik S.E."/>
            <person name="Smith C.D."/>
            <person name="Tupy J.L."/>
            <person name="Whitfield E.J."/>
            <person name="Bayraktaroglu L."/>
            <person name="Berman B.P."/>
            <person name="Bettencourt B.R."/>
            <person name="Celniker S.E."/>
            <person name="de Grey A.D.N.J."/>
            <person name="Drysdale R.A."/>
            <person name="Harris N.L."/>
            <person name="Richter J."/>
            <person name="Russo S."/>
            <person name="Schroeder A.J."/>
            <person name="Shu S.Q."/>
            <person name="Stapleton M."/>
            <person name="Yamada C."/>
            <person name="Ashburner M."/>
            <person name="Gelbart W.M."/>
            <person name="Rubin G.M."/>
            <person name="Lewis S.E."/>
        </authorList>
    </citation>
    <scope>GENOME REANNOTATION</scope>
    <source>
        <strain>Berkeley</strain>
    </source>
</reference>
<reference evidence="6 10" key="4">
    <citation type="journal article" date="2002" name="Genome Biol.">
        <title>A Drosophila full-length cDNA resource.</title>
        <authorList>
            <person name="Stapleton M."/>
            <person name="Carlson J.W."/>
            <person name="Brokstein P."/>
            <person name="Yu C."/>
            <person name="Champe M."/>
            <person name="George R.A."/>
            <person name="Guarin H."/>
            <person name="Kronmiller B."/>
            <person name="Pacleb J.M."/>
            <person name="Park S."/>
            <person name="Wan K.H."/>
            <person name="Rubin G.M."/>
            <person name="Celniker S.E."/>
        </authorList>
    </citation>
    <scope>NUCLEOTIDE SEQUENCE [LARGE SCALE MRNA]</scope>
    <source>
        <strain evidence="10">Berkeley</strain>
        <tissue evidence="4">Head</tissue>
    </source>
</reference>
<gene>
    <name evidence="11" type="primary">Paics</name>
    <name evidence="5" type="synonym">ade5</name>
    <name evidence="11" type="ORF">CG3989</name>
</gene>
<sequence>MSTTTTASIEGYKLGKVIIEGKTKQVYDLPEQPGLCLLLSKDRITAGDGVKAHDLAGKAEISNTTNGQVFRLLNEAGIRTAYVKQCGAKAFIARKCQMIPIEWVTRRLATGSFLKRNVGVPEGYRFSPPKQETFFKDDANHDPQWSEEQIVSAKFELNGLVIGQDEVDIMRRTTLLVFEILERAWQTKNCALIDMKVEFGICDDGNIVLADIIDSDSWRLWPAGDKRLMVDKQVYRNLASVTASDLDTVKRNFIWVAEQLADIVPKKDHLVVILMGSASDISHSEKIATSCRSLGLNVELRVSSAHKGPEETLRIVREYESVMSNLIFVAVAGRSNGLGPVVSGSTNYPVINCPPVKSDNMQVDVWSSLNLPSGLGCATVLYPEAAALHAATILGLGNFMVWSKLRVKALNNFITLKKADKELRGVRNA</sequence>
<comment type="function">
    <text evidence="3">Bifunctional phosphoribosylaminoimidazole carboxylase and phosphoribosylaminoimidazole succinocarboxamide synthetase catalyzing two reactions of the de novo purine biosynthetic pathway.</text>
</comment>
<comment type="catalytic activity">
    <reaction evidence="3">
        <text>5-amino-1-(5-phospho-D-ribosyl)imidazole-4-carboxylate + L-aspartate + ATP = (2S)-2-[5-amino-1-(5-phospho-beta-D-ribosyl)imidazole-4-carboxamido]succinate + ADP + phosphate + 2 H(+)</text>
        <dbReference type="Rhea" id="RHEA:22628"/>
        <dbReference type="ChEBI" id="CHEBI:15378"/>
        <dbReference type="ChEBI" id="CHEBI:29991"/>
        <dbReference type="ChEBI" id="CHEBI:30616"/>
        <dbReference type="ChEBI" id="CHEBI:43474"/>
        <dbReference type="ChEBI" id="CHEBI:58443"/>
        <dbReference type="ChEBI" id="CHEBI:77657"/>
        <dbReference type="ChEBI" id="CHEBI:456216"/>
        <dbReference type="EC" id="6.3.2.6"/>
    </reaction>
    <physiologicalReaction direction="left-to-right" evidence="7">
        <dbReference type="Rhea" id="RHEA:22629"/>
    </physiologicalReaction>
</comment>
<comment type="catalytic activity">
    <reaction evidence="3">
        <text>5-amino-1-(5-phospho-D-ribosyl)imidazole-4-carboxylate + H(+) = 5-amino-1-(5-phospho-beta-D-ribosyl)imidazole + CO2</text>
        <dbReference type="Rhea" id="RHEA:10792"/>
        <dbReference type="ChEBI" id="CHEBI:15378"/>
        <dbReference type="ChEBI" id="CHEBI:16526"/>
        <dbReference type="ChEBI" id="CHEBI:77657"/>
        <dbReference type="ChEBI" id="CHEBI:137981"/>
        <dbReference type="EC" id="4.1.1.21"/>
    </reaction>
    <physiologicalReaction direction="right-to-left" evidence="7">
        <dbReference type="Rhea" id="RHEA:10794"/>
    </physiologicalReaction>
</comment>
<comment type="pathway">
    <text evidence="1">Purine metabolism; IMP biosynthesis via de novo pathway; 5-amino-1-(5-phospho-D-ribosyl)imidazole-4-carboxamide from 5-amino-1-(5-phospho-D-ribosyl)imidazole-4-carboxylate: step 1/2.</text>
</comment>
<comment type="pathway">
    <text evidence="1">Purine metabolism; IMP biosynthesis via de novo pathway; 5-amino-1-(5-phospho-D-ribosyl)imidazole-4-carboxylate from 5-amino-1-(5-phospho-D-ribosyl)imidazole (carboxylase route): step 1/1.</text>
</comment>
<comment type="subunit">
    <text evidence="1">Homooctamer.</text>
</comment>
<comment type="interaction">
    <interactant intactId="EBI-95676">
        <id>Q9I7S8</id>
    </interactant>
    <interactant intactId="EBI-15132962">
        <id>Q9V3V9</id>
        <label>EndoGI</label>
    </interactant>
    <organismsDiffer>false</organismsDiffer>
    <experiments>3</experiments>
</comment>
<comment type="similarity">
    <text evidence="2">In the N-terminal section; belongs to the SAICAR synthetase family.</text>
</comment>
<comment type="similarity">
    <text evidence="2">In the C-terminal section; belongs to the AIR carboxylase family. Class II subfamily.</text>
</comment>
<keyword id="KW-0067">ATP-binding</keyword>
<keyword id="KW-0210">Decarboxylase</keyword>
<keyword id="KW-0436">Ligase</keyword>
<keyword id="KW-0456">Lyase</keyword>
<keyword id="KW-0511">Multifunctional enzyme</keyword>
<keyword id="KW-0547">Nucleotide-binding</keyword>
<keyword id="KW-0658">Purine biosynthesis</keyword>
<keyword id="KW-1185">Reference proteome</keyword>
<name>PUR6_DROME</name>
<evidence type="ECO:0000250" key="1">
    <source>
        <dbReference type="UniProtKB" id="P22234"/>
    </source>
</evidence>
<evidence type="ECO:0000255" key="2"/>
<evidence type="ECO:0000269" key="3">
    <source>
    </source>
</evidence>
<evidence type="ECO:0000269" key="4">
    <source>
    </source>
</evidence>
<evidence type="ECO:0000303" key="5">
    <source>
    </source>
</evidence>
<evidence type="ECO:0000305" key="6"/>
<evidence type="ECO:0000305" key="7">
    <source>
    </source>
</evidence>
<evidence type="ECO:0000312" key="8">
    <source>
        <dbReference type="EMBL" id="AAF06356.1"/>
    </source>
</evidence>
<evidence type="ECO:0000312" key="9">
    <source>
        <dbReference type="EMBL" id="AAG22346.2"/>
    </source>
</evidence>
<evidence type="ECO:0000312" key="10">
    <source>
        <dbReference type="EMBL" id="AAM12252.1"/>
    </source>
</evidence>
<evidence type="ECO:0000312" key="11">
    <source>
        <dbReference type="FlyBase" id="FBgn0020513"/>
    </source>
</evidence>
<accession>Q9I7S8</accession>
<accession>Q9TVK1</accession>
<feature type="chain" id="PRO_0000075035" description="Bifunctional phosphoribosylaminoimidazole carboxylase/phosphoribosylaminoimidazole succinocarboxamide synthetase">
    <location>
        <begin position="1"/>
        <end position="429"/>
    </location>
</feature>
<feature type="region of interest" description="SAICAR synthetase" evidence="2">
    <location>
        <begin position="7"/>
        <end position="264"/>
    </location>
</feature>
<feature type="region of interest" description="SAICAR synthetase domain" evidence="1">
    <location>
        <begin position="7"/>
        <end position="264"/>
    </location>
</feature>
<feature type="region of interest" description="AIR carboxylase" evidence="2">
    <location>
        <begin position="265"/>
        <end position="429"/>
    </location>
</feature>
<feature type="region of interest" description="AIR carboxylase domain" evidence="1">
    <location>
        <begin position="270"/>
        <end position="429"/>
    </location>
</feature>
<feature type="binding site" evidence="1">
    <location>
        <position position="335"/>
    </location>
    <ligand>
        <name>CO2</name>
        <dbReference type="ChEBI" id="CHEBI:16526"/>
    </ligand>
</feature>
<proteinExistence type="evidence at protein level"/>
<dbReference type="EC" id="6.3.2.6" evidence="3"/>
<dbReference type="EC" id="4.1.1.21" evidence="3"/>
<dbReference type="EMBL" id="AF102579">
    <property type="protein sequence ID" value="AAF06355.1"/>
    <property type="molecule type" value="mRNA"/>
</dbReference>
<dbReference type="EMBL" id="AF102580">
    <property type="protein sequence ID" value="AAF06356.1"/>
    <property type="molecule type" value="Genomic_DNA"/>
</dbReference>
<dbReference type="EMBL" id="AE014298">
    <property type="protein sequence ID" value="AAG22346.2"/>
    <property type="molecule type" value="Genomic_DNA"/>
</dbReference>
<dbReference type="EMBL" id="AY095520">
    <property type="protein sequence ID" value="AAM12252.1"/>
    <property type="molecule type" value="mRNA"/>
</dbReference>
<dbReference type="RefSeq" id="NP_572826.1">
    <property type="nucleotide sequence ID" value="NM_132598.4"/>
</dbReference>
<dbReference type="SMR" id="Q9I7S8"/>
<dbReference type="BioGRID" id="58620">
    <property type="interactions" value="8"/>
</dbReference>
<dbReference type="FunCoup" id="Q9I7S8">
    <property type="interactions" value="1619"/>
</dbReference>
<dbReference type="IntAct" id="Q9I7S8">
    <property type="interactions" value="148"/>
</dbReference>
<dbReference type="STRING" id="7227.FBpp0073538"/>
<dbReference type="GlyGen" id="Q9I7S8">
    <property type="glycosylation" value="1 site, 1 O-linked glycan (1 site)"/>
</dbReference>
<dbReference type="PaxDb" id="7227-FBpp0073538"/>
<dbReference type="DNASU" id="32228"/>
<dbReference type="EnsemblMetazoa" id="FBtr0073705">
    <property type="protein sequence ID" value="FBpp0073538"/>
    <property type="gene ID" value="FBgn0020513"/>
</dbReference>
<dbReference type="GeneID" id="32228"/>
<dbReference type="KEGG" id="dme:Dmel_CG3989"/>
<dbReference type="AGR" id="FB:FBgn0020513"/>
<dbReference type="CTD" id="10606"/>
<dbReference type="FlyBase" id="FBgn0020513">
    <property type="gene designation" value="Paics"/>
</dbReference>
<dbReference type="VEuPathDB" id="VectorBase:FBgn0020513"/>
<dbReference type="eggNOG" id="KOG2835">
    <property type="taxonomic scope" value="Eukaryota"/>
</dbReference>
<dbReference type="GeneTree" id="ENSGT00390000010172"/>
<dbReference type="HOGENOM" id="CLU_061495_1_0_1"/>
<dbReference type="InParanoid" id="Q9I7S8"/>
<dbReference type="OMA" id="WSDEQII"/>
<dbReference type="OrthoDB" id="9991235at2759"/>
<dbReference type="PhylomeDB" id="Q9I7S8"/>
<dbReference type="BRENDA" id="6.3.2.6">
    <property type="organism ID" value="1994"/>
</dbReference>
<dbReference type="Reactome" id="R-DME-73817">
    <property type="pathway name" value="Purine ribonucleoside monophosphate biosynthesis"/>
</dbReference>
<dbReference type="UniPathway" id="UPA00074">
    <property type="reaction ID" value="UER00130"/>
</dbReference>
<dbReference type="UniPathway" id="UPA00074">
    <property type="reaction ID" value="UER00131"/>
</dbReference>
<dbReference type="BioGRID-ORCS" id="32228">
    <property type="hits" value="0 hits in 3 CRISPR screens"/>
</dbReference>
<dbReference type="ChiTaRS" id="ade5">
    <property type="organism name" value="fly"/>
</dbReference>
<dbReference type="GenomeRNAi" id="32228"/>
<dbReference type="PRO" id="PR:Q9I7S8"/>
<dbReference type="Proteomes" id="UP000000803">
    <property type="component" value="Chromosome X"/>
</dbReference>
<dbReference type="Bgee" id="FBgn0020513">
    <property type="expression patterns" value="Expressed in capitellum (Drosophila) and 149 other cell types or tissues"/>
</dbReference>
<dbReference type="ExpressionAtlas" id="Q9I7S8">
    <property type="expression patterns" value="baseline and differential"/>
</dbReference>
<dbReference type="GO" id="GO:0005737">
    <property type="term" value="C:cytoplasm"/>
    <property type="evidence" value="ECO:0000250"/>
    <property type="project" value="FlyBase"/>
</dbReference>
<dbReference type="GO" id="GO:0005829">
    <property type="term" value="C:cytosol"/>
    <property type="evidence" value="ECO:0007005"/>
    <property type="project" value="FlyBase"/>
</dbReference>
<dbReference type="GO" id="GO:0005524">
    <property type="term" value="F:ATP binding"/>
    <property type="evidence" value="ECO:0007669"/>
    <property type="project" value="UniProtKB-KW"/>
</dbReference>
<dbReference type="GO" id="GO:0004638">
    <property type="term" value="F:phosphoribosylaminoimidazole carboxylase activity"/>
    <property type="evidence" value="ECO:0000250"/>
    <property type="project" value="FlyBase"/>
</dbReference>
<dbReference type="GO" id="GO:0004639">
    <property type="term" value="F:phosphoribosylaminoimidazolesuccinocarboxamide synthase activity"/>
    <property type="evidence" value="ECO:0000316"/>
    <property type="project" value="FlyBase"/>
</dbReference>
<dbReference type="GO" id="GO:0006189">
    <property type="term" value="P:'de novo' IMP biosynthetic process"/>
    <property type="evidence" value="ECO:0000315"/>
    <property type="project" value="FlyBase"/>
</dbReference>
<dbReference type="CDD" id="cd01416">
    <property type="entry name" value="SAICAR_synt_Ade5"/>
    <property type="match status" value="1"/>
</dbReference>
<dbReference type="FunFam" id="3.40.50.1970:FF:000021">
    <property type="entry name" value="multifunctional protein ADE2"/>
    <property type="match status" value="1"/>
</dbReference>
<dbReference type="FunFam" id="3.30.200.20:FF:000183">
    <property type="entry name" value="Probable multifunctional protein ADE2"/>
    <property type="match status" value="1"/>
</dbReference>
<dbReference type="FunFam" id="3.30.470.20:FF:000020">
    <property type="entry name" value="Probable multifunctional protein ADE2"/>
    <property type="match status" value="1"/>
</dbReference>
<dbReference type="Gene3D" id="3.40.50.1970">
    <property type="match status" value="1"/>
</dbReference>
<dbReference type="Gene3D" id="3.30.470.20">
    <property type="entry name" value="ATP-grasp fold, B domain"/>
    <property type="match status" value="1"/>
</dbReference>
<dbReference type="Gene3D" id="3.30.200.20">
    <property type="entry name" value="Phosphorylase Kinase, domain 1"/>
    <property type="match status" value="1"/>
</dbReference>
<dbReference type="HAMAP" id="MF_02045">
    <property type="entry name" value="PurE_classII"/>
    <property type="match status" value="1"/>
</dbReference>
<dbReference type="HAMAP" id="MF_00137">
    <property type="entry name" value="SAICAR_synth"/>
    <property type="match status" value="1"/>
</dbReference>
<dbReference type="InterPro" id="IPR033626">
    <property type="entry name" value="PurE_classII"/>
</dbReference>
<dbReference type="InterPro" id="IPR000031">
    <property type="entry name" value="PurE_dom"/>
</dbReference>
<dbReference type="InterPro" id="IPR028923">
    <property type="entry name" value="SAICAR_synt/ADE2_N"/>
</dbReference>
<dbReference type="InterPro" id="IPR050089">
    <property type="entry name" value="SAICAR_synthetase"/>
</dbReference>
<dbReference type="InterPro" id="IPR018236">
    <property type="entry name" value="SAICAR_synthetase_CS"/>
</dbReference>
<dbReference type="NCBIfam" id="TIGR01162">
    <property type="entry name" value="purE"/>
    <property type="match status" value="1"/>
</dbReference>
<dbReference type="PANTHER" id="PTHR43599">
    <property type="entry name" value="MULTIFUNCTIONAL PROTEIN ADE2"/>
    <property type="match status" value="1"/>
</dbReference>
<dbReference type="PANTHER" id="PTHR43599:SF3">
    <property type="entry name" value="SI:DKEY-6E2.2"/>
    <property type="match status" value="1"/>
</dbReference>
<dbReference type="Pfam" id="PF00731">
    <property type="entry name" value="AIRC"/>
    <property type="match status" value="1"/>
</dbReference>
<dbReference type="Pfam" id="PF01259">
    <property type="entry name" value="SAICAR_synt"/>
    <property type="match status" value="1"/>
</dbReference>
<dbReference type="SMART" id="SM01001">
    <property type="entry name" value="AIRC"/>
    <property type="match status" value="1"/>
</dbReference>
<dbReference type="SUPFAM" id="SSF52255">
    <property type="entry name" value="N5-CAIR mutase (phosphoribosylaminoimidazole carboxylase, PurE)"/>
    <property type="match status" value="1"/>
</dbReference>
<dbReference type="SUPFAM" id="SSF56104">
    <property type="entry name" value="SAICAR synthase-like"/>
    <property type="match status" value="1"/>
</dbReference>
<dbReference type="PROSITE" id="PS01057">
    <property type="entry name" value="SAICAR_SYNTHETASE_1"/>
    <property type="match status" value="1"/>
</dbReference>
<protein>
    <recommendedName>
        <fullName evidence="7">Bifunctional phosphoribosylaminoimidazole carboxylase/phosphoribosylaminoimidazole succinocarboxamide synthetase</fullName>
        <shortName evidence="1">PAICS</shortName>
    </recommendedName>
    <alternativeName>
        <fullName evidence="5">Protein adenosine-5</fullName>
    </alternativeName>
    <domain>
        <recommendedName>
            <fullName evidence="7">Phosphoribosylaminoimidazole-succinocarboxamide synthase</fullName>
            <ecNumber evidence="3">6.3.2.6</ecNumber>
        </recommendedName>
        <alternativeName>
            <fullName evidence="5">SAICAR synthetase</fullName>
        </alternativeName>
    </domain>
    <domain>
        <recommendedName>
            <fullName evidence="7">Phosphoribosylaminoimidazole carboxylase</fullName>
            <ecNumber evidence="3">4.1.1.21</ecNumber>
        </recommendedName>
        <alternativeName>
            <fullName evidence="5">AIR carboxylase</fullName>
            <shortName evidence="5">AIRC</shortName>
        </alternativeName>
    </domain>
</protein>
<organism>
    <name type="scientific">Drosophila melanogaster</name>
    <name type="common">Fruit fly</name>
    <dbReference type="NCBI Taxonomy" id="7227"/>
    <lineage>
        <taxon>Eukaryota</taxon>
        <taxon>Metazoa</taxon>
        <taxon>Ecdysozoa</taxon>
        <taxon>Arthropoda</taxon>
        <taxon>Hexapoda</taxon>
        <taxon>Insecta</taxon>
        <taxon>Pterygota</taxon>
        <taxon>Neoptera</taxon>
        <taxon>Endopterygota</taxon>
        <taxon>Diptera</taxon>
        <taxon>Brachycera</taxon>
        <taxon>Muscomorpha</taxon>
        <taxon>Ephydroidea</taxon>
        <taxon>Drosophilidae</taxon>
        <taxon>Drosophila</taxon>
        <taxon>Sophophora</taxon>
    </lineage>
</organism>